<dbReference type="EC" id="5.6.1.3" evidence="1"/>
<dbReference type="EMBL" id="AABR07068350">
    <property type="status" value="NOT_ANNOTATED_CDS"/>
    <property type="molecule type" value="Genomic_DNA"/>
</dbReference>
<dbReference type="RefSeq" id="XP_017452401.1">
    <property type="nucleotide sequence ID" value="XM_017596912.3"/>
</dbReference>
<dbReference type="RefSeq" id="XP_017459418.1">
    <property type="nucleotide sequence ID" value="XM_017603929.1"/>
</dbReference>
<dbReference type="SMR" id="F1M4A4"/>
<dbReference type="FunCoup" id="F1M4A4">
    <property type="interactions" value="606"/>
</dbReference>
<dbReference type="IntAct" id="F1M4A4">
    <property type="interactions" value="1"/>
</dbReference>
<dbReference type="STRING" id="10116.ENSRNOP00000038927"/>
<dbReference type="iPTMnet" id="F1M4A4"/>
<dbReference type="PhosphoSitePlus" id="F1M4A4"/>
<dbReference type="jPOST" id="F1M4A4"/>
<dbReference type="PaxDb" id="10116-ENSRNOP00000038927"/>
<dbReference type="GeneID" id="363288"/>
<dbReference type="AGR" id="RGD:1304996"/>
<dbReference type="CTD" id="547"/>
<dbReference type="RGD" id="1304996">
    <property type="gene designation" value="Kif1a"/>
</dbReference>
<dbReference type="VEuPathDB" id="HostDB:ENSRNOG00000023993"/>
<dbReference type="eggNOG" id="KOG0245">
    <property type="taxonomic scope" value="Eukaryota"/>
</dbReference>
<dbReference type="HOGENOM" id="CLU_001485_10_1_1"/>
<dbReference type="InParanoid" id="F1M4A4"/>
<dbReference type="Reactome" id="R-RNO-2132295">
    <property type="pathway name" value="MHC class II antigen presentation"/>
</dbReference>
<dbReference type="Reactome" id="R-RNO-6811434">
    <property type="pathway name" value="COPI-dependent Golgi-to-ER retrograde traffic"/>
</dbReference>
<dbReference type="Reactome" id="R-RNO-983189">
    <property type="pathway name" value="Kinesins"/>
</dbReference>
<dbReference type="PRO" id="PR:F1M4A4"/>
<dbReference type="Proteomes" id="UP000002494">
    <property type="component" value="Chromosome 9"/>
</dbReference>
<dbReference type="Bgee" id="ENSRNOG00000023993">
    <property type="expression patterns" value="Expressed in frontal cortex and 13 other cell types or tissues"/>
</dbReference>
<dbReference type="GO" id="GO:0030424">
    <property type="term" value="C:axon"/>
    <property type="evidence" value="ECO:0000314"/>
    <property type="project" value="RGD"/>
</dbReference>
<dbReference type="GO" id="GO:1904115">
    <property type="term" value="C:axon cytoplasm"/>
    <property type="evidence" value="ECO:0007669"/>
    <property type="project" value="GOC"/>
</dbReference>
<dbReference type="GO" id="GO:0005737">
    <property type="term" value="C:cytoplasm"/>
    <property type="evidence" value="ECO:0000318"/>
    <property type="project" value="GO_Central"/>
</dbReference>
<dbReference type="GO" id="GO:0030425">
    <property type="term" value="C:dendrite"/>
    <property type="evidence" value="ECO:0000314"/>
    <property type="project" value="RGD"/>
</dbReference>
<dbReference type="GO" id="GO:0032839">
    <property type="term" value="C:dendrite cytoplasm"/>
    <property type="evidence" value="ECO:0007669"/>
    <property type="project" value="GOC"/>
</dbReference>
<dbReference type="GO" id="GO:0098978">
    <property type="term" value="C:glutamatergic synapse"/>
    <property type="evidence" value="ECO:0000314"/>
    <property type="project" value="SynGO"/>
</dbReference>
<dbReference type="GO" id="GO:0005871">
    <property type="term" value="C:kinesin complex"/>
    <property type="evidence" value="ECO:0000318"/>
    <property type="project" value="GO_Central"/>
</dbReference>
<dbReference type="GO" id="GO:0005874">
    <property type="term" value="C:microtubule"/>
    <property type="evidence" value="ECO:0000314"/>
    <property type="project" value="RGD"/>
</dbReference>
<dbReference type="GO" id="GO:0043005">
    <property type="term" value="C:neuron projection"/>
    <property type="evidence" value="ECO:0000266"/>
    <property type="project" value="RGD"/>
</dbReference>
<dbReference type="GO" id="GO:0043025">
    <property type="term" value="C:neuronal cell body"/>
    <property type="evidence" value="ECO:0000314"/>
    <property type="project" value="RGD"/>
</dbReference>
<dbReference type="GO" id="GO:0098992">
    <property type="term" value="C:neuronal dense core vesicle"/>
    <property type="evidence" value="ECO:0000314"/>
    <property type="project" value="UniProtKB"/>
</dbReference>
<dbReference type="GO" id="GO:0099012">
    <property type="term" value="C:neuronal dense core vesicle membrane"/>
    <property type="evidence" value="ECO:0007669"/>
    <property type="project" value="UniProtKB-SubCell"/>
</dbReference>
<dbReference type="GO" id="GO:0048471">
    <property type="term" value="C:perinuclear region of cytoplasm"/>
    <property type="evidence" value="ECO:0007669"/>
    <property type="project" value="UniProtKB-SubCell"/>
</dbReference>
<dbReference type="GO" id="GO:0098794">
    <property type="term" value="C:postsynapse"/>
    <property type="evidence" value="ECO:0000314"/>
    <property type="project" value="RGD"/>
</dbReference>
<dbReference type="GO" id="GO:0098793">
    <property type="term" value="C:presynapse"/>
    <property type="evidence" value="ECO:0000314"/>
    <property type="project" value="RGD"/>
</dbReference>
<dbReference type="GO" id="GO:0032991">
    <property type="term" value="C:protein-containing complex"/>
    <property type="evidence" value="ECO:0000314"/>
    <property type="project" value="RGD"/>
</dbReference>
<dbReference type="GO" id="GO:0008021">
    <property type="term" value="C:synaptic vesicle"/>
    <property type="evidence" value="ECO:0000314"/>
    <property type="project" value="RGD"/>
</dbReference>
<dbReference type="GO" id="GO:0005524">
    <property type="term" value="F:ATP binding"/>
    <property type="evidence" value="ECO:0007669"/>
    <property type="project" value="UniProtKB-KW"/>
</dbReference>
<dbReference type="GO" id="GO:0016887">
    <property type="term" value="F:ATP hydrolysis activity"/>
    <property type="evidence" value="ECO:0000318"/>
    <property type="project" value="GO_Central"/>
</dbReference>
<dbReference type="GO" id="GO:0042802">
    <property type="term" value="F:identical protein binding"/>
    <property type="evidence" value="ECO:0000353"/>
    <property type="project" value="RGD"/>
</dbReference>
<dbReference type="GO" id="GO:0008017">
    <property type="term" value="F:microtubule binding"/>
    <property type="evidence" value="ECO:0000314"/>
    <property type="project" value="RGD"/>
</dbReference>
<dbReference type="GO" id="GO:0008574">
    <property type="term" value="F:plus-end-directed microtubule motor activity"/>
    <property type="evidence" value="ECO:0000250"/>
    <property type="project" value="UniProtKB"/>
</dbReference>
<dbReference type="GO" id="GO:0008089">
    <property type="term" value="P:anterograde axonal transport"/>
    <property type="evidence" value="ECO:0000315"/>
    <property type="project" value="RGD"/>
</dbReference>
<dbReference type="GO" id="GO:0098937">
    <property type="term" value="P:anterograde dendritic transport"/>
    <property type="evidence" value="ECO:0000314"/>
    <property type="project" value="SynGO"/>
</dbReference>
<dbReference type="GO" id="GO:1990048">
    <property type="term" value="P:anterograde neuronal dense core vesicle transport"/>
    <property type="evidence" value="ECO:0000316"/>
    <property type="project" value="ARUK-UCL"/>
</dbReference>
<dbReference type="GO" id="GO:0048490">
    <property type="term" value="P:anterograde synaptic vesicle transport"/>
    <property type="evidence" value="ECO:0000266"/>
    <property type="project" value="RGD"/>
</dbReference>
<dbReference type="GO" id="GO:0099519">
    <property type="term" value="P:dense core granule cytoskeletal transport"/>
    <property type="evidence" value="ECO:0000315"/>
    <property type="project" value="UniProtKB"/>
</dbReference>
<dbReference type="GO" id="GO:0022027">
    <property type="term" value="P:interkinetic nuclear migration"/>
    <property type="evidence" value="ECO:0000315"/>
    <property type="project" value="RGD"/>
</dbReference>
<dbReference type="GO" id="GO:0098840">
    <property type="term" value="P:protein transport along microtubule"/>
    <property type="evidence" value="ECO:0000314"/>
    <property type="project" value="RGD"/>
</dbReference>
<dbReference type="GO" id="GO:0060998">
    <property type="term" value="P:regulation of dendritic spine development"/>
    <property type="evidence" value="ECO:0000315"/>
    <property type="project" value="UniProtKB"/>
</dbReference>
<dbReference type="GO" id="GO:0061001">
    <property type="term" value="P:regulation of dendritic spine morphogenesis"/>
    <property type="evidence" value="ECO:0000315"/>
    <property type="project" value="UniProtKB"/>
</dbReference>
<dbReference type="GO" id="GO:1990049">
    <property type="term" value="P:retrograde neuronal dense core vesicle transport"/>
    <property type="evidence" value="ECO:0000316"/>
    <property type="project" value="ARUK-UCL"/>
</dbReference>
<dbReference type="GO" id="GO:0016192">
    <property type="term" value="P:vesicle-mediated transport"/>
    <property type="evidence" value="ECO:0000318"/>
    <property type="project" value="GO_Central"/>
</dbReference>
<dbReference type="CDD" id="cd22726">
    <property type="entry name" value="FHA_KIF1A"/>
    <property type="match status" value="1"/>
</dbReference>
<dbReference type="CDD" id="cd01365">
    <property type="entry name" value="KISc_KIF1A_KIF1B"/>
    <property type="match status" value="1"/>
</dbReference>
<dbReference type="CDD" id="cd01233">
    <property type="entry name" value="PH_KIFIA_KIFIB"/>
    <property type="match status" value="1"/>
</dbReference>
<dbReference type="FunFam" id="2.30.29.30:FF:000023">
    <property type="entry name" value="Kinesin family member 1B"/>
    <property type="match status" value="1"/>
</dbReference>
<dbReference type="FunFam" id="2.60.200.20:FF:000001">
    <property type="entry name" value="Kinesin family member 1B"/>
    <property type="match status" value="1"/>
</dbReference>
<dbReference type="FunFam" id="3.40.850.10:FF:000004">
    <property type="entry name" value="Kinesin-like protein isoform 2"/>
    <property type="match status" value="1"/>
</dbReference>
<dbReference type="Gene3D" id="2.60.200.20">
    <property type="match status" value="1"/>
</dbReference>
<dbReference type="Gene3D" id="6.10.250.2520">
    <property type="match status" value="1"/>
</dbReference>
<dbReference type="Gene3D" id="3.40.850.10">
    <property type="entry name" value="Kinesin motor domain"/>
    <property type="match status" value="1"/>
</dbReference>
<dbReference type="Gene3D" id="2.30.29.30">
    <property type="entry name" value="Pleckstrin-homology domain (PH domain)/Phosphotyrosine-binding domain (PTB)"/>
    <property type="match status" value="1"/>
</dbReference>
<dbReference type="InterPro" id="IPR000253">
    <property type="entry name" value="FHA_dom"/>
</dbReference>
<dbReference type="InterPro" id="IPR049779">
    <property type="entry name" value="FHA_KIF1A"/>
</dbReference>
<dbReference type="InterPro" id="IPR022164">
    <property type="entry name" value="Kinesin-like"/>
</dbReference>
<dbReference type="InterPro" id="IPR022140">
    <property type="entry name" value="Kinesin-like_KIF1-typ"/>
</dbReference>
<dbReference type="InterPro" id="IPR032405">
    <property type="entry name" value="Kinesin_assoc"/>
</dbReference>
<dbReference type="InterPro" id="IPR019821">
    <property type="entry name" value="Kinesin_motor_CS"/>
</dbReference>
<dbReference type="InterPro" id="IPR001752">
    <property type="entry name" value="Kinesin_motor_dom"/>
</dbReference>
<dbReference type="InterPro" id="IPR036961">
    <property type="entry name" value="Kinesin_motor_dom_sf"/>
</dbReference>
<dbReference type="InterPro" id="IPR027417">
    <property type="entry name" value="P-loop_NTPase"/>
</dbReference>
<dbReference type="InterPro" id="IPR011993">
    <property type="entry name" value="PH-like_dom_sf"/>
</dbReference>
<dbReference type="InterPro" id="IPR001849">
    <property type="entry name" value="PH_domain"/>
</dbReference>
<dbReference type="InterPro" id="IPR049780">
    <property type="entry name" value="PH_KIFIA_KIFIB"/>
</dbReference>
<dbReference type="InterPro" id="IPR008984">
    <property type="entry name" value="SMAD_FHA_dom_sf"/>
</dbReference>
<dbReference type="PANTHER" id="PTHR47117:SF2">
    <property type="entry name" value="KINESIN-LIKE PROTEIN KIF1A ISOFORM X1"/>
    <property type="match status" value="1"/>
</dbReference>
<dbReference type="PANTHER" id="PTHR47117">
    <property type="entry name" value="STAR-RELATED LIPID TRANSFER PROTEIN 9"/>
    <property type="match status" value="1"/>
</dbReference>
<dbReference type="Pfam" id="PF12473">
    <property type="entry name" value="DUF3694"/>
    <property type="match status" value="1"/>
</dbReference>
<dbReference type="Pfam" id="PF00498">
    <property type="entry name" value="FHA"/>
    <property type="match status" value="1"/>
</dbReference>
<dbReference type="Pfam" id="PF12423">
    <property type="entry name" value="KIF1B"/>
    <property type="match status" value="1"/>
</dbReference>
<dbReference type="Pfam" id="PF00225">
    <property type="entry name" value="Kinesin"/>
    <property type="match status" value="1"/>
</dbReference>
<dbReference type="Pfam" id="PF16183">
    <property type="entry name" value="Kinesin_assoc"/>
    <property type="match status" value="1"/>
</dbReference>
<dbReference type="Pfam" id="PF00169">
    <property type="entry name" value="PH"/>
    <property type="match status" value="1"/>
</dbReference>
<dbReference type="PRINTS" id="PR00380">
    <property type="entry name" value="KINESINHEAVY"/>
</dbReference>
<dbReference type="SMART" id="SM00240">
    <property type="entry name" value="FHA"/>
    <property type="match status" value="1"/>
</dbReference>
<dbReference type="SMART" id="SM00129">
    <property type="entry name" value="KISc"/>
    <property type="match status" value="1"/>
</dbReference>
<dbReference type="SMART" id="SM00233">
    <property type="entry name" value="PH"/>
    <property type="match status" value="1"/>
</dbReference>
<dbReference type="SUPFAM" id="SSF52540">
    <property type="entry name" value="P-loop containing nucleoside triphosphate hydrolases"/>
    <property type="match status" value="1"/>
</dbReference>
<dbReference type="SUPFAM" id="SSF50729">
    <property type="entry name" value="PH domain-like"/>
    <property type="match status" value="1"/>
</dbReference>
<dbReference type="SUPFAM" id="SSF49879">
    <property type="entry name" value="SMAD/FHA domain"/>
    <property type="match status" value="1"/>
</dbReference>
<dbReference type="PROSITE" id="PS50006">
    <property type="entry name" value="FHA_DOMAIN"/>
    <property type="match status" value="1"/>
</dbReference>
<dbReference type="PROSITE" id="PS00411">
    <property type="entry name" value="KINESIN_MOTOR_1"/>
    <property type="match status" value="1"/>
</dbReference>
<dbReference type="PROSITE" id="PS50067">
    <property type="entry name" value="KINESIN_MOTOR_2"/>
    <property type="match status" value="1"/>
</dbReference>
<dbReference type="PROSITE" id="PS50003">
    <property type="entry name" value="PH_DOMAIN"/>
    <property type="match status" value="1"/>
</dbReference>
<sequence length="1707" mass="192934">MAGASVKVAVRVRPFNSREMSRDSKCIIQMSGSTTTIVNPKQPKETPKSFSFDYSYWSHTSPEDINYASQKQVYRDIGEEMLQHAFEGYNVCIFAYGQTGAGKSYTMMGKQEKDQQGIIPQLCEDLFSRINDTTNDNMSYSVEVSYMEIYCERVRDLLNPKNKGNLRVREHPLLGPYVEDLSKLAVTSYNDIQDLMDSGNKARTVAATNMNETSSRSHAVFNIIFTQKRHDAETNITTEKVSKISLVDLAGSERADSTGAKGTRLKEGANINKSLTTLGKVISALAEMDSGPNKNKKKKKTDFIPYRDSVLTWLLRENLGGNSRTAMVAALSPADINYDETLSTLRYADRAKQIRCNAIINEDPNNKLIRELKDEVTRLRDLLYAQGLGDITDTNTVPGGPKLTNALVGMSPSSSLSALSSRAASVSSLHERILFAPGSEEAIERLKETEKIIAELNETWEEKLRRTEAIRMEREALLAEMGVAMREDGGTLGVFSPKKTPHLVNLNEDPLMSECLLYYIKDGVTRVGREDAERRQDIVLSGHFIKEEHCIFRSDSRGGGEAVVTLEPCEGADTYVNGKKVTEPSILRSGNRIIMGKSHVFRFNHPEQARQERERTPCAETPAEPVDWAFAQRELLEKQGIDMKQEMEQRLQELEDQYRREREEATYLLEQQRLDYESKLEALQKQMDSRYYPEVNEEEEEPEDEVQWTERECELALWAFRKWKWYQFTSLRDLLWGNAIFLKEANAISVELKKKVQFQFVLLTDTLYSPLPPDLLPPEAAKDRETRPFPRTIVAVEVQDQKNGATHYWTLEKLRQRLDLMREMYDRAAEVPSSVVEDCDNVVTGGDPFYDRFPWFRLVGRAFVYLSNLLYPVPLVHRVAIVSEKGEVKGFLRVAVQAISADEEAPDYGSGVRQSGTAKISFDDQHFEKFQSESCPVVGMSRSGTSQEELRIVEGQGQGADAGPSADEVNNNTCSAVPPEGLLDSPEKAALDGPLDTALDHLRLGSTFTFRVTVLQASSISAEYADIFCQFNFIHRHDEAFSTEPLKNTGRGPPLGFYHVQNIAVEVTKSFIEYIKSQPIVFEVFGHYQQHPFPPLCKDVLSPLRPSRRHFPRVMPLSKPVPATKLSTMTRPSPGPCHCKYDLLVYFEICELEANGDYIPAVVDHRGGMPCMGTFLLHQGIQRRITVTLLHETGSHIRWKEVRELVVGRIRNTPETDEALIDPNILSLNILSSGYVHPAQDDRQFLDSDIPRTFYQFEAAWDSSMHNSLLLNRVTPYREKIYMTLSAYIEMENCTQPAVITKDFCMVFYSRDAKLPASRSIRNLFGSGSLRATEGNRVTGVYELSLCHVADAGSPGMQRRRRRVLDTSVAYVRGEENLAGWRPRSDSLILDHQWELEKLSLLQEVEKTRHYLLLREKLETTQRPVPEVLSPASSEDSESRSSSGASSPLSAEGQPSPLEVPNERQRELAVKCLRLLMHTFNREYTHSHVCISASESKLSEMSVTLMRDPSMSPLGAATLTPSSTCPSLIEGRYGATDVRTPQPCSRPASPEPELLPELDSKKTPSPVRATETEKEPQRLLVPDIQEIRVSPIVSKKGYLHFLEPHTAGWAKRFVVVRRPYAYMYNSDKDTVERFVLNLSTAQVEYSEDQQAMLKTPNTFAVCTEHRGILLQANSDKDMHDWLYAFNPLLAGTIRSKLSRRRSAQMRV</sequence>
<organism>
    <name type="scientific">Rattus norvegicus</name>
    <name type="common">Rat</name>
    <dbReference type="NCBI Taxonomy" id="10116"/>
    <lineage>
        <taxon>Eukaryota</taxon>
        <taxon>Metazoa</taxon>
        <taxon>Chordata</taxon>
        <taxon>Craniata</taxon>
        <taxon>Vertebrata</taxon>
        <taxon>Euteleostomi</taxon>
        <taxon>Mammalia</taxon>
        <taxon>Eutheria</taxon>
        <taxon>Euarchontoglires</taxon>
        <taxon>Glires</taxon>
        <taxon>Rodentia</taxon>
        <taxon>Myomorpha</taxon>
        <taxon>Muroidea</taxon>
        <taxon>Muridae</taxon>
        <taxon>Murinae</taxon>
        <taxon>Rattus</taxon>
    </lineage>
</organism>
<name>KIF1A_RAT</name>
<gene>
    <name evidence="12" type="primary">Kif1a</name>
</gene>
<feature type="chain" id="PRO_0000448662" description="Kinesin-like protein KIF1A">
    <location>
        <begin position="1"/>
        <end position="1707"/>
    </location>
</feature>
<feature type="domain" description="Kinesin motor" evidence="6">
    <location>
        <begin position="5"/>
        <end position="354"/>
    </location>
</feature>
<feature type="domain" description="FHA" evidence="4">
    <location>
        <begin position="525"/>
        <end position="581"/>
    </location>
</feature>
<feature type="domain" description="PH" evidence="5">
    <location>
        <begin position="1592"/>
        <end position="1690"/>
    </location>
</feature>
<feature type="region of interest" description="Required for interaction with CALM1, PPFIA2 and TANC2" evidence="10">
    <location>
        <begin position="657"/>
        <end position="1105"/>
    </location>
</feature>
<feature type="region of interest" description="Disordered" evidence="7">
    <location>
        <begin position="1424"/>
        <end position="1462"/>
    </location>
</feature>
<feature type="region of interest" description="Disordered" evidence="7">
    <location>
        <begin position="1536"/>
        <end position="1576"/>
    </location>
</feature>
<feature type="coiled-coil region" evidence="3">
    <location>
        <begin position="439"/>
        <end position="466"/>
    </location>
</feature>
<feature type="coiled-coil region" evidence="3">
    <location>
        <begin position="637"/>
        <end position="671"/>
    </location>
</feature>
<feature type="coiled-coil region" evidence="3">
    <location>
        <begin position="811"/>
        <end position="831"/>
    </location>
</feature>
<feature type="compositionally biased region" description="Low complexity" evidence="7">
    <location>
        <begin position="1429"/>
        <end position="1453"/>
    </location>
</feature>
<feature type="binding site" evidence="1">
    <location>
        <position position="102"/>
    </location>
    <ligand>
        <name>ATP</name>
        <dbReference type="ChEBI" id="CHEBI:30616"/>
    </ligand>
</feature>
<feature type="binding site" evidence="1">
    <location>
        <position position="103"/>
    </location>
    <ligand>
        <name>ATP</name>
        <dbReference type="ChEBI" id="CHEBI:30616"/>
    </ligand>
</feature>
<feature type="binding site" evidence="1">
    <location>
        <position position="104"/>
    </location>
    <ligand>
        <name>ATP</name>
        <dbReference type="ChEBI" id="CHEBI:30616"/>
    </ligand>
</feature>
<feature type="binding site" evidence="1">
    <location>
        <position position="104"/>
    </location>
    <ligand>
        <name>Mg(2+)</name>
        <dbReference type="ChEBI" id="CHEBI:18420"/>
    </ligand>
</feature>
<feature type="binding site" evidence="1">
    <location>
        <position position="105"/>
    </location>
    <ligand>
        <name>ATP</name>
        <dbReference type="ChEBI" id="CHEBI:30616"/>
    </ligand>
</feature>
<feature type="binding site" evidence="1">
    <location>
        <position position="215"/>
    </location>
    <ligand>
        <name>ATP</name>
        <dbReference type="ChEBI" id="CHEBI:30616"/>
    </ligand>
</feature>
<feature type="mutagenesis site" description="Abolishes interaction with CALM1. Decreases interaction with SYT4 and SYT11. Abolishes location to neuronal dense core vesicles." evidence="10">
    <original>WKWYQFTSL</original>
    <variation>AKAAQATSA</variation>
    <location>
        <begin position="723"/>
        <end position="731"/>
    </location>
</feature>
<keyword id="KW-0067">ATP-binding</keyword>
<keyword id="KW-0966">Cell projection</keyword>
<keyword id="KW-0175">Coiled coil</keyword>
<keyword id="KW-0963">Cytoplasm</keyword>
<keyword id="KW-0968">Cytoplasmic vesicle</keyword>
<keyword id="KW-0206">Cytoskeleton</keyword>
<keyword id="KW-0378">Hydrolase</keyword>
<keyword id="KW-0413">Isomerase</keyword>
<keyword id="KW-0460">Magnesium</keyword>
<keyword id="KW-0472">Membrane</keyword>
<keyword id="KW-0479">Metal-binding</keyword>
<keyword id="KW-0493">Microtubule</keyword>
<keyword id="KW-0505">Motor protein</keyword>
<keyword id="KW-0547">Nucleotide-binding</keyword>
<keyword id="KW-0597">Phosphoprotein</keyword>
<keyword id="KW-1185">Reference proteome</keyword>
<keyword id="KW-0770">Synapse</keyword>
<reference key="1">
    <citation type="journal article" date="2004" name="Nature">
        <title>Genome sequence of the Brown Norway rat yields insights into mammalian evolution.</title>
        <authorList>
            <person name="Gibbs R.A."/>
            <person name="Weinstock G.M."/>
            <person name="Metzker M.L."/>
            <person name="Muzny D.M."/>
            <person name="Sodergren E.J."/>
            <person name="Scherer S."/>
            <person name="Scott G."/>
            <person name="Steffen D."/>
            <person name="Worley K.C."/>
            <person name="Burch P.E."/>
            <person name="Okwuonu G."/>
            <person name="Hines S."/>
            <person name="Lewis L."/>
            <person name="Deramo C."/>
            <person name="Delgado O."/>
            <person name="Dugan-Rocha S."/>
            <person name="Miner G."/>
            <person name="Morgan M."/>
            <person name="Hawes A."/>
            <person name="Gill R."/>
            <person name="Holt R.A."/>
            <person name="Adams M.D."/>
            <person name="Amanatides P.G."/>
            <person name="Baden-Tillson H."/>
            <person name="Barnstead M."/>
            <person name="Chin S."/>
            <person name="Evans C.A."/>
            <person name="Ferriera S."/>
            <person name="Fosler C."/>
            <person name="Glodek A."/>
            <person name="Gu Z."/>
            <person name="Jennings D."/>
            <person name="Kraft C.L."/>
            <person name="Nguyen T."/>
            <person name="Pfannkoch C.M."/>
            <person name="Sitter C."/>
            <person name="Sutton G.G."/>
            <person name="Venter J.C."/>
            <person name="Woodage T."/>
            <person name="Smith D."/>
            <person name="Lee H.-M."/>
            <person name="Gustafson E."/>
            <person name="Cahill P."/>
            <person name="Kana A."/>
            <person name="Doucette-Stamm L."/>
            <person name="Weinstock K."/>
            <person name="Fechtel K."/>
            <person name="Weiss R.B."/>
            <person name="Dunn D.M."/>
            <person name="Green E.D."/>
            <person name="Blakesley R.W."/>
            <person name="Bouffard G.G."/>
            <person name="De Jong P.J."/>
            <person name="Osoegawa K."/>
            <person name="Zhu B."/>
            <person name="Marra M."/>
            <person name="Schein J."/>
            <person name="Bosdet I."/>
            <person name="Fjell C."/>
            <person name="Jones S."/>
            <person name="Krzywinski M."/>
            <person name="Mathewson C."/>
            <person name="Siddiqui A."/>
            <person name="Wye N."/>
            <person name="McPherson J."/>
            <person name="Zhao S."/>
            <person name="Fraser C.M."/>
            <person name="Shetty J."/>
            <person name="Shatsman S."/>
            <person name="Geer K."/>
            <person name="Chen Y."/>
            <person name="Abramzon S."/>
            <person name="Nierman W.C."/>
            <person name="Havlak P.H."/>
            <person name="Chen R."/>
            <person name="Durbin K.J."/>
            <person name="Egan A."/>
            <person name="Ren Y."/>
            <person name="Song X.-Z."/>
            <person name="Li B."/>
            <person name="Liu Y."/>
            <person name="Qin X."/>
            <person name="Cawley S."/>
            <person name="Cooney A.J."/>
            <person name="D'Souza L.M."/>
            <person name="Martin K."/>
            <person name="Wu J.Q."/>
            <person name="Gonzalez-Garay M.L."/>
            <person name="Jackson A.R."/>
            <person name="Kalafus K.J."/>
            <person name="McLeod M.P."/>
            <person name="Milosavljevic A."/>
            <person name="Virk D."/>
            <person name="Volkov A."/>
            <person name="Wheeler D.A."/>
            <person name="Zhang Z."/>
            <person name="Bailey J.A."/>
            <person name="Eichler E.E."/>
            <person name="Tuzun E."/>
            <person name="Birney E."/>
            <person name="Mongin E."/>
            <person name="Ureta-Vidal A."/>
            <person name="Woodwark C."/>
            <person name="Zdobnov E."/>
            <person name="Bork P."/>
            <person name="Suyama M."/>
            <person name="Torrents D."/>
            <person name="Alexandersson M."/>
            <person name="Trask B.J."/>
            <person name="Young J.M."/>
            <person name="Huang H."/>
            <person name="Wang H."/>
            <person name="Xing H."/>
            <person name="Daniels S."/>
            <person name="Gietzen D."/>
            <person name="Schmidt J."/>
            <person name="Stevens K."/>
            <person name="Vitt U."/>
            <person name="Wingrove J."/>
            <person name="Camara F."/>
            <person name="Mar Alba M."/>
            <person name="Abril J.F."/>
            <person name="Guigo R."/>
            <person name="Smit A."/>
            <person name="Dubchak I."/>
            <person name="Rubin E.M."/>
            <person name="Couronne O."/>
            <person name="Poliakov A."/>
            <person name="Huebner N."/>
            <person name="Ganten D."/>
            <person name="Goesele C."/>
            <person name="Hummel O."/>
            <person name="Kreitler T."/>
            <person name="Lee Y.-A."/>
            <person name="Monti J."/>
            <person name="Schulz H."/>
            <person name="Zimdahl H."/>
            <person name="Himmelbauer H."/>
            <person name="Lehrach H."/>
            <person name="Jacob H.J."/>
            <person name="Bromberg S."/>
            <person name="Gullings-Handley J."/>
            <person name="Jensen-Seaman M.I."/>
            <person name="Kwitek A.E."/>
            <person name="Lazar J."/>
            <person name="Pasko D."/>
            <person name="Tonellato P.J."/>
            <person name="Twigger S."/>
            <person name="Ponting C.P."/>
            <person name="Duarte J.M."/>
            <person name="Rice S."/>
            <person name="Goodstadt L."/>
            <person name="Beatson S.A."/>
            <person name="Emes R.D."/>
            <person name="Winter E.E."/>
            <person name="Webber C."/>
            <person name="Brandt P."/>
            <person name="Nyakatura G."/>
            <person name="Adetobi M."/>
            <person name="Chiaromonte F."/>
            <person name="Elnitski L."/>
            <person name="Eswara P."/>
            <person name="Hardison R.C."/>
            <person name="Hou M."/>
            <person name="Kolbe D."/>
            <person name="Makova K."/>
            <person name="Miller W."/>
            <person name="Nekrutenko A."/>
            <person name="Riemer C."/>
            <person name="Schwartz S."/>
            <person name="Taylor J."/>
            <person name="Yang S."/>
            <person name="Zhang Y."/>
            <person name="Lindpaintner K."/>
            <person name="Andrews T.D."/>
            <person name="Caccamo M."/>
            <person name="Clamp M."/>
            <person name="Clarke L."/>
            <person name="Curwen V."/>
            <person name="Durbin R.M."/>
            <person name="Eyras E."/>
            <person name="Searle S.M."/>
            <person name="Cooper G.M."/>
            <person name="Batzoglou S."/>
            <person name="Brudno M."/>
            <person name="Sidow A."/>
            <person name="Stone E.A."/>
            <person name="Payseur B.A."/>
            <person name="Bourque G."/>
            <person name="Lopez-Otin C."/>
            <person name="Puente X.S."/>
            <person name="Chakrabarti K."/>
            <person name="Chatterji S."/>
            <person name="Dewey C."/>
            <person name="Pachter L."/>
            <person name="Bray N."/>
            <person name="Yap V.B."/>
            <person name="Caspi A."/>
            <person name="Tesler G."/>
            <person name="Pevzner P.A."/>
            <person name="Haussler D."/>
            <person name="Roskin K.M."/>
            <person name="Baertsch R."/>
            <person name="Clawson H."/>
            <person name="Furey T.S."/>
            <person name="Hinrichs A.S."/>
            <person name="Karolchik D."/>
            <person name="Kent W.J."/>
            <person name="Rosenbloom K.R."/>
            <person name="Trumbower H."/>
            <person name="Weirauch M."/>
            <person name="Cooper D.N."/>
            <person name="Stenson P.D."/>
            <person name="Ma B."/>
            <person name="Brent M."/>
            <person name="Arumugam M."/>
            <person name="Shteynberg D."/>
            <person name="Copley R.R."/>
            <person name="Taylor M.S."/>
            <person name="Riethman H."/>
            <person name="Mudunuri U."/>
            <person name="Peterson J."/>
            <person name="Guyer M."/>
            <person name="Felsenfeld A."/>
            <person name="Old S."/>
            <person name="Mockrin S."/>
            <person name="Collins F.S."/>
        </authorList>
    </citation>
    <scope>NUCLEOTIDE SEQUENCE [LARGE SCALE GENOMIC DNA]</scope>
    <source>
        <strain>Brown Norway</strain>
    </source>
</reference>
<reference key="2">
    <citation type="journal article" date="2009" name="PLoS Biol.">
        <title>Mammalian Kinesin-3 motors are dimeric in vivo and move by processive motility upon release of autoinhibition.</title>
        <authorList>
            <person name="Hammond J.W."/>
            <person name="Cai D."/>
            <person name="Blasius T.L."/>
            <person name="Li Z."/>
            <person name="Jiang Y."/>
            <person name="Jih G.T."/>
            <person name="Meyhofer E."/>
            <person name="Verhey K.J."/>
        </authorList>
    </citation>
    <scope>SUBUNIT</scope>
</reference>
<reference evidence="13" key="3">
    <citation type="journal article" date="2012" name="Nat. Commun.">
        <title>Quantitative maps of protein phosphorylation sites across 14 different rat organs and tissues.</title>
        <authorList>
            <person name="Lundby A."/>
            <person name="Secher A."/>
            <person name="Lage K."/>
            <person name="Nordsborg N.B."/>
            <person name="Dmytriyev A."/>
            <person name="Lundby C."/>
            <person name="Olsen J.V."/>
        </authorList>
    </citation>
    <scope>IDENTIFICATION BY MASS SPECTROMETRY [LARGE SCALE ANALYSIS]</scope>
</reference>
<reference key="4">
    <citation type="journal article" date="2017" name="Cell Rep.">
        <title>Capture of Dense Core Vesicles at Synapses by JNK-Dependent Phosphorylation of Synaptotagmin-4.</title>
        <authorList>
            <person name="Bharat V."/>
            <person name="Siebrecht M."/>
            <person name="Burk K."/>
            <person name="Ahmed S."/>
            <person name="Reissner C."/>
            <person name="Kohansal-Nodehi M."/>
            <person name="Steubler V."/>
            <person name="Zweckstetter M."/>
            <person name="Ting J.T."/>
            <person name="Dean C."/>
        </authorList>
    </citation>
    <scope>FUNCTION</scope>
    <scope>INTERACTION WITH SYT4</scope>
    <scope>SUBCELLULAR LOCATION</scope>
</reference>
<reference key="5">
    <citation type="journal article" date="2018" name="Cell Rep.">
        <title>Regulation of KIF1A-Driven Dense Core Vesicle Transport: Ca2+/CaM Controls DCV Binding and Liprin-alpha/TANC2 Recruits DCVs to Postsynaptic Sites.</title>
        <authorList>
            <person name="Stucchi R."/>
            <person name="Plucinska G."/>
            <person name="Hummel J.J.A."/>
            <person name="Zahavi E.E."/>
            <person name="Guerra San Juan I."/>
            <person name="Klykov O."/>
            <person name="Scheltema R.A."/>
            <person name="Altelaar A.F.M."/>
            <person name="Hoogenraad C.C."/>
        </authorList>
    </citation>
    <scope>FUNCTION</scope>
    <scope>SUBCELLULAR LOCATION</scope>
    <scope>INTERACTION WITH CALM1; PPFIA2; SYT4; SYT11 AND TANC2</scope>
    <scope>MUTAGENESIS OF 723-TRP--LEU-731</scope>
</reference>
<proteinExistence type="evidence at protein level"/>
<protein>
    <recommendedName>
        <fullName>Kinesin-like protein KIF1A</fullName>
        <ecNumber evidence="1">5.6.1.3</ecNumber>
    </recommendedName>
</protein>
<evidence type="ECO:0000250" key="1">
    <source>
        <dbReference type="UniProtKB" id="P33173"/>
    </source>
</evidence>
<evidence type="ECO:0000250" key="2">
    <source>
        <dbReference type="UniProtKB" id="Q12756"/>
    </source>
</evidence>
<evidence type="ECO:0000255" key="3"/>
<evidence type="ECO:0000255" key="4">
    <source>
        <dbReference type="PROSITE-ProRule" id="PRU00086"/>
    </source>
</evidence>
<evidence type="ECO:0000255" key="5">
    <source>
        <dbReference type="PROSITE-ProRule" id="PRU00145"/>
    </source>
</evidence>
<evidence type="ECO:0000255" key="6">
    <source>
        <dbReference type="PROSITE-ProRule" id="PRU00283"/>
    </source>
</evidence>
<evidence type="ECO:0000256" key="7">
    <source>
        <dbReference type="SAM" id="MobiDB-lite"/>
    </source>
</evidence>
<evidence type="ECO:0000269" key="8">
    <source>
    </source>
</evidence>
<evidence type="ECO:0000269" key="9">
    <source>
    </source>
</evidence>
<evidence type="ECO:0000269" key="10">
    <source>
    </source>
</evidence>
<evidence type="ECO:0000305" key="11">
    <source>
    </source>
</evidence>
<evidence type="ECO:0000312" key="12">
    <source>
        <dbReference type="RGD" id="1304996"/>
    </source>
</evidence>
<evidence type="ECO:0007744" key="13">
    <source>
    </source>
</evidence>
<comment type="function">
    <text evidence="1 9 10">Kinesin motor with a plus-end-directed microtubule motor activity, involved in anterograde axonal transport of synaptic vesicle precursors (By similarity). Also required for neuronal dense core vesicles (DCVs) transport to the dendritic spines and axons (PubMed:29166604, PubMed:30021165). The interaction calcium-dependent with CALM1 increases vesicle motility and interaction with the scaffolding proteins PPFIA2 and TANC2 recruits DCVs to synaptic sites (PubMed:30021165).</text>
</comment>
<comment type="catalytic activity">
    <reaction evidence="1">
        <text>ATP + H2O + a kinesin associated with a microtubule at position (n) = ADP + phosphate a kinesin associated with a microtubule at position (n+1, toward the plus end).</text>
        <dbReference type="EC" id="5.6.1.3"/>
    </reaction>
</comment>
<comment type="subunit">
    <text evidence="1 8 9 10">Dimeric motor; dimerization is required for ATP-driven processive motility (PubMed:19338388). Monomer in vitro (PubMed:19338388). Interacts with PPFIA1 and PPFIA4 (By similarity). Interacts with CALM1; the interaction is increased in presence of calcium and increases neuronal dense core vesicles motility (PubMed:30021165). Interacts with PPFIA2 and TANC2; both interactions allow the recruitment of neuronal dense core vesicles to dendritic spines and decrease in presence of calcium (PubMed:30021165). Interacts with SYT4 (unphosphorylated) and SYT11; both interactions increase in presence of calcium (PubMed:29166604, PubMed:30021165). Interacts with MADD (By similarity).</text>
</comment>
<comment type="interaction">
    <interactant intactId="EBI-11691394">
        <id>F1M4A4</id>
    </interactant>
    <interactant intactId="EBI-11890817">
        <id>A0A142I9X8</id>
        <label>US9</label>
    </interactant>
    <organismsDiffer>true</organismsDiffer>
    <experiments>5</experiments>
</comment>
<comment type="subcellular location">
    <subcellularLocation>
        <location evidence="2">Cytoplasm</location>
        <location evidence="2">Cytoskeleton</location>
    </subcellularLocation>
    <subcellularLocation>
        <location evidence="2">Cell projection</location>
        <location evidence="2">Neuron projection</location>
    </subcellularLocation>
    <subcellularLocation>
        <location evidence="1">Cell projection</location>
        <location evidence="1">Axon</location>
    </subcellularLocation>
    <subcellularLocation>
        <location evidence="1">Cytoplasm</location>
        <location evidence="1">Perinuclear region</location>
    </subcellularLocation>
    <subcellularLocation>
        <location evidence="1">Synapse</location>
    </subcellularLocation>
    <subcellularLocation>
        <location evidence="9 10">Cytoplasmic vesicle</location>
        <location evidence="9 10">Secretory vesicle</location>
        <location evidence="9 10">Neuronal dense core vesicle membrane</location>
        <topology evidence="11">Peripheral membrane protein</topology>
        <orientation evidence="11">Cytoplasmic side</orientation>
    </subcellularLocation>
    <text evidence="1 2">Within neuronal cells concentrated in the axon, with smaller amounts in the perinuclear and synaptic regions (By similarity). Expressed in distal regions of neurites.</text>
</comment>
<comment type="domain">
    <text evidence="2">Composed of an N-terminal active core containing the motor domain (MD) and a neck coil (NC), a central regulatory center required for dimerization and activation and containing the FHA domain and coiled coils (CC1 and CC2), and a cargo-recognition region containing a coiled coil (CC3), an undefined region (UDR) and the C-terminal PH domain.</text>
</comment>
<comment type="similarity">
    <text evidence="6">Belongs to the TRAFAC class myosin-kinesin ATPase superfamily. Kinesin family. Unc-104 subfamily.</text>
</comment>
<accession>F1M4A4</accession>